<organism>
    <name type="scientific">Influenza A virus (strain A/Swine/Kanagawa/2/1978 H1N2)</name>
    <dbReference type="NCBI Taxonomy" id="38983"/>
    <lineage>
        <taxon>Viruses</taxon>
        <taxon>Riboviria</taxon>
        <taxon>Orthornavirae</taxon>
        <taxon>Negarnaviricota</taxon>
        <taxon>Polyploviricotina</taxon>
        <taxon>Insthoviricetes</taxon>
        <taxon>Articulavirales</taxon>
        <taxon>Orthomyxoviridae</taxon>
        <taxon>Alphainfluenzavirus</taxon>
        <taxon>Alphainfluenzavirus influenzae</taxon>
        <taxon>Influenza A virus</taxon>
    </lineage>
</organism>
<evidence type="ECO:0000255" key="1">
    <source>
        <dbReference type="HAMAP-Rule" id="MF_04071"/>
    </source>
</evidence>
<keyword id="KW-0106">Calcium</keyword>
<keyword id="KW-1015">Disulfide bond</keyword>
<keyword id="KW-0325">Glycoprotein</keyword>
<keyword id="KW-0326">Glycosidase</keyword>
<keyword id="KW-1032">Host cell membrane</keyword>
<keyword id="KW-1043">Host membrane</keyword>
<keyword id="KW-0378">Hydrolase</keyword>
<keyword id="KW-0472">Membrane</keyword>
<keyword id="KW-0479">Metal-binding</keyword>
<keyword id="KW-0735">Signal-anchor</keyword>
<keyword id="KW-0812">Transmembrane</keyword>
<keyword id="KW-1133">Transmembrane helix</keyword>
<keyword id="KW-0946">Virion</keyword>
<protein>
    <recommendedName>
        <fullName evidence="1">Neuraminidase</fullName>
        <ecNumber evidence="1">3.2.1.18</ecNumber>
    </recommendedName>
</protein>
<dbReference type="EC" id="3.2.1.18" evidence="1"/>
<dbReference type="EMBL" id="D00714">
    <property type="protein sequence ID" value="BAA00619.1"/>
    <property type="molecule type" value="Genomic_RNA"/>
</dbReference>
<dbReference type="SMR" id="Q09106"/>
<dbReference type="CAZy" id="GH34">
    <property type="family name" value="Glycoside Hydrolase Family 34"/>
</dbReference>
<dbReference type="GlyCosmos" id="Q09106">
    <property type="glycosylation" value="8 sites, No reported glycans"/>
</dbReference>
<dbReference type="GO" id="GO:0020002">
    <property type="term" value="C:host cell plasma membrane"/>
    <property type="evidence" value="ECO:0007669"/>
    <property type="project" value="UniProtKB-SubCell"/>
</dbReference>
<dbReference type="GO" id="GO:0016020">
    <property type="term" value="C:membrane"/>
    <property type="evidence" value="ECO:0007669"/>
    <property type="project" value="UniProtKB-UniRule"/>
</dbReference>
<dbReference type="GO" id="GO:0055036">
    <property type="term" value="C:virion membrane"/>
    <property type="evidence" value="ECO:0007669"/>
    <property type="project" value="UniProtKB-SubCell"/>
</dbReference>
<dbReference type="GO" id="GO:0004308">
    <property type="term" value="F:exo-alpha-sialidase activity"/>
    <property type="evidence" value="ECO:0007669"/>
    <property type="project" value="UniProtKB-UniRule"/>
</dbReference>
<dbReference type="GO" id="GO:0046872">
    <property type="term" value="F:metal ion binding"/>
    <property type="evidence" value="ECO:0007669"/>
    <property type="project" value="UniProtKB-UniRule"/>
</dbReference>
<dbReference type="GO" id="GO:0005975">
    <property type="term" value="P:carbohydrate metabolic process"/>
    <property type="evidence" value="ECO:0007669"/>
    <property type="project" value="InterPro"/>
</dbReference>
<dbReference type="GO" id="GO:0046761">
    <property type="term" value="P:viral budding from plasma membrane"/>
    <property type="evidence" value="ECO:0007669"/>
    <property type="project" value="UniProtKB-UniRule"/>
</dbReference>
<dbReference type="CDD" id="cd15483">
    <property type="entry name" value="Influenza_NA"/>
    <property type="match status" value="1"/>
</dbReference>
<dbReference type="Gene3D" id="2.120.10.10">
    <property type="match status" value="1"/>
</dbReference>
<dbReference type="HAMAP" id="MF_04071">
    <property type="entry name" value="INFV_NRAM"/>
    <property type="match status" value="1"/>
</dbReference>
<dbReference type="InterPro" id="IPR001860">
    <property type="entry name" value="Glyco_hydro_34"/>
</dbReference>
<dbReference type="InterPro" id="IPR033654">
    <property type="entry name" value="Sialidase_Influenza_A/B"/>
</dbReference>
<dbReference type="InterPro" id="IPR036278">
    <property type="entry name" value="Sialidase_sf"/>
</dbReference>
<dbReference type="Pfam" id="PF00064">
    <property type="entry name" value="Neur"/>
    <property type="match status" value="1"/>
</dbReference>
<dbReference type="SUPFAM" id="SSF50939">
    <property type="entry name" value="Sialidases"/>
    <property type="match status" value="1"/>
</dbReference>
<gene>
    <name evidence="1" type="primary">NA</name>
</gene>
<reference key="1">
    <citation type="journal article" date="1991" name="J. Gen. Virol.">
        <title>Evolutionary pathways of N2 neuraminidases of swine and human influenza A viruses: origin of the neuraminidase genes of two reassortants (H1N2) isolated from pigs.</title>
        <authorList>
            <person name="Nerome K."/>
            <person name="Kanegae Y."/>
            <person name="Yoshioka Y."/>
            <person name="Itamura S."/>
            <person name="Ishida M."/>
            <person name="Gojobori T."/>
            <person name="Oya A."/>
        </authorList>
    </citation>
    <scope>NUCLEOTIDE SEQUENCE [GENOMIC RNA]</scope>
</reference>
<reference key="2">
    <citation type="journal article" date="2004" name="Virus Res.">
        <title>Assembly and budding of influenza virus.</title>
        <authorList>
            <person name="Nayak D.P."/>
            <person name="Hui E.K."/>
            <person name="Barman S."/>
        </authorList>
    </citation>
    <scope>REVIEW</scope>
</reference>
<reference key="3">
    <citation type="journal article" date="2005" name="N. Engl. J. Med.">
        <title>Neuraminidase inhibitors for influenza.</title>
        <authorList>
            <person name="Moscona A."/>
        </authorList>
    </citation>
    <scope>REVIEW</scope>
</reference>
<reference key="4">
    <citation type="journal article" date="2005" name="Biol. Pharm. Bull.">
        <title>Sialobiology of influenza: molecular mechanism of host range variation of influenza viruses.</title>
        <authorList>
            <person name="Suzuki Y."/>
        </authorList>
    </citation>
    <scope>REVIEW</scope>
</reference>
<feature type="chain" id="PRO_0000078729" description="Neuraminidase">
    <location>
        <begin position="1"/>
        <end position="469"/>
    </location>
</feature>
<feature type="topological domain" description="Intravirion" evidence="1">
    <location>
        <begin position="1"/>
        <end position="9"/>
    </location>
</feature>
<feature type="transmembrane region" description="Helical" evidence="1">
    <location>
        <begin position="10"/>
        <end position="30"/>
    </location>
</feature>
<feature type="topological domain" description="Virion surface" evidence="1">
    <location>
        <begin position="31"/>
        <end position="469"/>
    </location>
</feature>
<feature type="region of interest" description="Involved in apical transport and lipid raft association" evidence="1">
    <location>
        <begin position="11"/>
        <end position="33"/>
    </location>
</feature>
<feature type="region of interest" description="Hypervariable stalk region" evidence="1">
    <location>
        <begin position="36"/>
        <end position="88"/>
    </location>
</feature>
<feature type="region of interest" description="Head of neuraminidase" evidence="1">
    <location>
        <begin position="91"/>
        <end position="469"/>
    </location>
</feature>
<feature type="active site" description="Proton donor/acceptor" evidence="1">
    <location>
        <position position="151"/>
    </location>
</feature>
<feature type="active site" description="Nucleophile" evidence="1">
    <location>
        <position position="406"/>
    </location>
</feature>
<feature type="binding site" evidence="1">
    <location>
        <position position="118"/>
    </location>
    <ligand>
        <name>substrate</name>
    </ligand>
</feature>
<feature type="binding site" evidence="1">
    <location>
        <position position="152"/>
    </location>
    <ligand>
        <name>substrate</name>
    </ligand>
</feature>
<feature type="binding site" evidence="1">
    <location>
        <begin position="276"/>
        <end position="277"/>
    </location>
    <ligand>
        <name>substrate</name>
    </ligand>
</feature>
<feature type="binding site" evidence="1">
    <location>
        <position position="292"/>
    </location>
    <ligand>
        <name>substrate</name>
    </ligand>
</feature>
<feature type="binding site" evidence="1">
    <location>
        <position position="293"/>
    </location>
    <ligand>
        <name>Ca(2+)</name>
        <dbReference type="ChEBI" id="CHEBI:29108"/>
    </ligand>
</feature>
<feature type="binding site" evidence="1">
    <location>
        <position position="297"/>
    </location>
    <ligand>
        <name>Ca(2+)</name>
        <dbReference type="ChEBI" id="CHEBI:29108"/>
    </ligand>
</feature>
<feature type="binding site" evidence="1">
    <location>
        <position position="324"/>
    </location>
    <ligand>
        <name>Ca(2+)</name>
        <dbReference type="ChEBI" id="CHEBI:29108"/>
    </ligand>
</feature>
<feature type="binding site" evidence="1">
    <location>
        <position position="371"/>
    </location>
    <ligand>
        <name>substrate</name>
    </ligand>
</feature>
<feature type="glycosylation site" description="N-linked (GlcNAc...) asparagine; by host" evidence="1">
    <location>
        <position position="61"/>
    </location>
</feature>
<feature type="glycosylation site" description="N-linked (GlcNAc...) asparagine; by host" evidence="1">
    <location>
        <position position="70"/>
    </location>
</feature>
<feature type="glycosylation site" description="N-linked (GlcNAc...) asparagine; by host" evidence="1">
    <location>
        <position position="86"/>
    </location>
</feature>
<feature type="glycosylation site" description="N-linked (GlcNAc...) asparagine; by host" evidence="1">
    <location>
        <position position="146"/>
    </location>
</feature>
<feature type="glycosylation site" description="N-linked (GlcNAc...) asparagine; by host" evidence="1">
    <location>
        <position position="200"/>
    </location>
</feature>
<feature type="glycosylation site" description="N-linked (GlcNAc...) asparagine; by host" evidence="1">
    <location>
        <position position="234"/>
    </location>
</feature>
<feature type="glycosylation site" description="N-linked (GlcNAc...) asparagine; by host" evidence="1">
    <location>
        <position position="313"/>
    </location>
</feature>
<feature type="glycosylation site" description="N-linked (GlcNAc...) asparagine; by host" evidence="1">
    <location>
        <position position="402"/>
    </location>
</feature>
<feature type="disulfide bond" evidence="1">
    <location>
        <begin position="92"/>
        <end position="417"/>
    </location>
</feature>
<feature type="disulfide bond" evidence="1">
    <location>
        <begin position="124"/>
        <end position="129"/>
    </location>
</feature>
<feature type="disulfide bond" evidence="1">
    <location>
        <begin position="183"/>
        <end position="230"/>
    </location>
</feature>
<feature type="disulfide bond" evidence="1">
    <location>
        <begin position="232"/>
        <end position="237"/>
    </location>
</feature>
<feature type="disulfide bond" evidence="1">
    <location>
        <begin position="278"/>
        <end position="291"/>
    </location>
</feature>
<feature type="disulfide bond" evidence="1">
    <location>
        <begin position="280"/>
        <end position="289"/>
    </location>
</feature>
<feature type="disulfide bond" evidence="1">
    <location>
        <begin position="318"/>
        <end position="337"/>
    </location>
</feature>
<feature type="disulfide bond" evidence="1">
    <location>
        <begin position="421"/>
        <end position="447"/>
    </location>
</feature>
<organismHost>
    <name type="scientific">Aves</name>
    <dbReference type="NCBI Taxonomy" id="8782"/>
</organismHost>
<organismHost>
    <name type="scientific">Sus scrofa</name>
    <name type="common">Pig</name>
    <dbReference type="NCBI Taxonomy" id="9823"/>
</organismHost>
<accession>Q09106</accession>
<comment type="function">
    <text evidence="1">Catalyzes the removal of terminal sialic acid residues from viral and cellular glycoconjugates. Cleaves off the terminal sialic acids on the glycosylated HA during virus budding to facilitate virus release. Additionally helps virus spread through the circulation by further removing sialic acids from the cell surface. These cleavages prevent self-aggregation and ensure the efficient spread of the progeny virus from cell to cell. Otherwise, infection would be limited to one round of replication. Described as a receptor-destroying enzyme because it cleaves a terminal sialic acid from the cellular receptors. May facilitate viral invasion of the upper airways by cleaving the sialic acid moieties on the mucin of the airway epithelial cells. Likely to plays a role in the budding process through its association with lipid rafts during intracellular transport. May additionally display a raft-association independent effect on budding. Plays a role in the determination of host range restriction on replication and virulence. Sialidase activity in late endosome/lysosome traffic seems to enhance virus replication.</text>
</comment>
<comment type="catalytic activity">
    <reaction evidence="1">
        <text>Hydrolysis of alpha-(2-&gt;3)-, alpha-(2-&gt;6)-, alpha-(2-&gt;8)- glycosidic linkages of terminal sialic acid residues in oligosaccharides, glycoproteins, glycolipids, colominic acid and synthetic substrates.</text>
        <dbReference type="EC" id="3.2.1.18"/>
    </reaction>
</comment>
<comment type="cofactor">
    <cofactor evidence="1">
        <name>Ca(2+)</name>
        <dbReference type="ChEBI" id="CHEBI:29108"/>
    </cofactor>
</comment>
<comment type="activity regulation">
    <text evidence="1">Inhibited by the neuraminidase inhibitors zanamivir (Relenza) and oseltamivir (Tamiflu). These drugs interfere with the release of progeny virus from infected cells and are effective against all influenza strains. Resistance to neuraminidase inhibitors is quite rare.</text>
</comment>
<comment type="subunit">
    <text evidence="1">Homotetramer.</text>
</comment>
<comment type="subcellular location">
    <subcellularLocation>
        <location evidence="1">Virion membrane</location>
    </subcellularLocation>
    <subcellularLocation>
        <location evidence="1">Host apical cell membrane</location>
        <topology evidence="1">Single-pass type II membrane protein</topology>
    </subcellularLocation>
    <text evidence="1">Preferentially accumulates at the apical plasma membrane in infected polarized epithelial cells, which is the virus assembly site. Uses lipid rafts for cell surface transport and apical sorting. In the virion, forms a mushroom-shaped spike on the surface of the membrane.</text>
</comment>
<comment type="domain">
    <text evidence="1">Intact N-terminus is essential for virion morphogenesis. Possesses two apical sorting signals, one in the ectodomain, which is likely to be a glycan, and the other in the transmembrane domain. The transmembrane domain also plays a role in lipid raft association.</text>
</comment>
<comment type="PTM">
    <text evidence="1">N-glycosylated.</text>
</comment>
<comment type="miscellaneous">
    <text>The influenza A genome consist of 8 RNA segments. Genetic variation of hemagglutinin and/or neuraminidase genes results in the emergence of new influenza strains. The mechanism of variation can be the result of point mutations or the result of genetic reassortment between segments of two different strains.</text>
</comment>
<comment type="similarity">
    <text evidence="1">Belongs to the glycosyl hydrolase 34 family.</text>
</comment>
<sequence>MNPNQKIITIGSVSLTFAAICFLMQIAILVTTVTLNFKQYECDPPATNQVMPCEPIIIERNITEIVYLTNTTIEREICPKLVEYRNWSKPQCKITGFAPFSKDNSIRLSAGGDIWVTREPYVSCDPGRCYQFALGQGTTLDNKHSNDTIHDRTPHRTLLMNELGVPFHLGTRQVCIAWSSSSCHDGKAWLHVCITGYDKNATASFIYDGRLVDSIGSWSKNILRTQESECVCINGTCTVVMTDGSASGRADTRILFIEEGRIVHISPLSGSAQHVEECSCYPRYPGVRCICRDNWKGSNRPVVDINVKDYSINSSYVCSGLVGDTPRNNDRSSNSYCQNPNNEKGNHGVKGWAFDDGNDVWMGRTISEDSRSGYQTFKVIGGWSTPNSKLQINRQVIVDSDNRSGYSGIFSVEGKSCINRCFYVELIRGRRQETRVWWTSNSIVVFCGTSGTYGTGSWPDGADINLMPI</sequence>
<proteinExistence type="inferred from homology"/>
<name>NRAM_I78AB</name>